<accession>Q65G93</accession>
<accession>Q62RP8</accession>
<reference key="1">
    <citation type="journal article" date="2004" name="J. Mol. Microbiol. Biotechnol.">
        <title>The complete genome sequence of Bacillus licheniformis DSM13, an organism with great industrial potential.</title>
        <authorList>
            <person name="Veith B."/>
            <person name="Herzberg C."/>
            <person name="Steckel S."/>
            <person name="Feesche J."/>
            <person name="Maurer K.H."/>
            <person name="Ehrenreich P."/>
            <person name="Baeumer S."/>
            <person name="Henne A."/>
            <person name="Liesegang H."/>
            <person name="Merkl R."/>
            <person name="Ehrenreich A."/>
            <person name="Gottschalk G."/>
        </authorList>
    </citation>
    <scope>NUCLEOTIDE SEQUENCE [LARGE SCALE GENOMIC DNA]</scope>
    <source>
        <strain>ATCC 14580 / DSM 13 / JCM 2505 / CCUG 7422 / NBRC 12200 / NCIMB 9375 / NCTC 10341 / NRRL NRS-1264 / Gibson 46</strain>
    </source>
</reference>
<reference key="2">
    <citation type="journal article" date="2004" name="Genome Biol.">
        <title>Complete genome sequence of the industrial bacterium Bacillus licheniformis and comparisons with closely related Bacillus species.</title>
        <authorList>
            <person name="Rey M.W."/>
            <person name="Ramaiya P."/>
            <person name="Nelson B.A."/>
            <person name="Brody-Karpin S.D."/>
            <person name="Zaretsky E.J."/>
            <person name="Tang M."/>
            <person name="Lopez de Leon A."/>
            <person name="Xiang H."/>
            <person name="Gusti V."/>
            <person name="Clausen I.G."/>
            <person name="Olsen P.B."/>
            <person name="Rasmussen M.D."/>
            <person name="Andersen J.T."/>
            <person name="Joergensen P.L."/>
            <person name="Larsen T.S."/>
            <person name="Sorokin A."/>
            <person name="Bolotin A."/>
            <person name="Lapidus A."/>
            <person name="Galleron N."/>
            <person name="Ehrlich S.D."/>
            <person name="Berka R.M."/>
        </authorList>
    </citation>
    <scope>NUCLEOTIDE SEQUENCE [LARGE SCALE GENOMIC DNA]</scope>
    <source>
        <strain>ATCC 14580 / DSM 13 / JCM 2505 / CCUG 7422 / NBRC 12200 / NCIMB 9375 / NCTC 10341 / NRRL NRS-1264 / Gibson 46</strain>
    </source>
</reference>
<sequence>MPELPEVETVRRTLAGLVRGKTIDAVDVRWTKIIKRPEEPEEFARLLAGQTIQSIGRRGKFLLFHLDDCVMVSHLRMEGKYGLHQNDEPLDKHVHVIFRFTDGSELRYRDVRKFGTMHLFKPGEELTELPLRQLGPEPFSSEFTADYLRERLKKTNRSVKTALLDQRTVVGLGNIYVDEALFRAGIHPEATANKLTKKQTVLLHKEIIQTLKEAVEAGGSTVRSYINSQGEIGMFQLKLFVYGRKDEPCKKCGSPIEKTVVGGRGTHFCIKCQKK</sequence>
<gene>
    <name evidence="2" type="primary">mutM</name>
    <name evidence="2" type="synonym">fpg</name>
    <name type="ordered locus">BLi03056</name>
    <name type="ordered locus">BL00393</name>
</gene>
<protein>
    <recommendedName>
        <fullName evidence="2">Formamidopyrimidine-DNA glycosylase</fullName>
        <shortName evidence="2">Fapy-DNA glycosylase</shortName>
        <ecNumber evidence="2">3.2.2.23</ecNumber>
    </recommendedName>
    <alternativeName>
        <fullName evidence="2">DNA-(apurinic or apyrimidinic site) lyase MutM</fullName>
        <shortName evidence="2">AP lyase MutM</shortName>
        <ecNumber evidence="2">4.2.99.18</ecNumber>
    </alternativeName>
</protein>
<proteinExistence type="inferred from homology"/>
<keyword id="KW-0227">DNA damage</keyword>
<keyword id="KW-0234">DNA repair</keyword>
<keyword id="KW-0238">DNA-binding</keyword>
<keyword id="KW-0326">Glycosidase</keyword>
<keyword id="KW-0378">Hydrolase</keyword>
<keyword id="KW-0456">Lyase</keyword>
<keyword id="KW-0479">Metal-binding</keyword>
<keyword id="KW-0511">Multifunctional enzyme</keyword>
<keyword id="KW-1185">Reference proteome</keyword>
<keyword id="KW-0862">Zinc</keyword>
<keyword id="KW-0863">Zinc-finger</keyword>
<feature type="initiator methionine" description="Removed" evidence="1">
    <location>
        <position position="1"/>
    </location>
</feature>
<feature type="chain" id="PRO_0000228414" description="Formamidopyrimidine-DNA glycosylase">
    <location>
        <begin position="2"/>
        <end position="275"/>
    </location>
</feature>
<feature type="zinc finger region" description="FPG-type" evidence="2">
    <location>
        <begin position="240"/>
        <end position="274"/>
    </location>
</feature>
<feature type="active site" description="Schiff-base intermediate with DNA" evidence="2">
    <location>
        <position position="2"/>
    </location>
</feature>
<feature type="active site" description="Proton donor" evidence="2">
    <location>
        <position position="3"/>
    </location>
</feature>
<feature type="active site" description="Proton donor; for beta-elimination activity" evidence="2">
    <location>
        <position position="60"/>
    </location>
</feature>
<feature type="active site" description="Proton donor; for delta-elimination activity" evidence="2">
    <location>
        <position position="264"/>
    </location>
</feature>
<feature type="binding site" evidence="2">
    <location>
        <position position="93"/>
    </location>
    <ligand>
        <name>DNA</name>
        <dbReference type="ChEBI" id="CHEBI:16991"/>
    </ligand>
</feature>
<feature type="binding site" evidence="2">
    <location>
        <position position="112"/>
    </location>
    <ligand>
        <name>DNA</name>
        <dbReference type="ChEBI" id="CHEBI:16991"/>
    </ligand>
</feature>
<evidence type="ECO:0000250" key="1"/>
<evidence type="ECO:0000255" key="2">
    <source>
        <dbReference type="HAMAP-Rule" id="MF_00103"/>
    </source>
</evidence>
<organism>
    <name type="scientific">Bacillus licheniformis (strain ATCC 14580 / DSM 13 / JCM 2505 / CCUG 7422 / NBRC 12200 / NCIMB 9375 / NCTC 10341 / NRRL NRS-1264 / Gibson 46)</name>
    <dbReference type="NCBI Taxonomy" id="279010"/>
    <lineage>
        <taxon>Bacteria</taxon>
        <taxon>Bacillati</taxon>
        <taxon>Bacillota</taxon>
        <taxon>Bacilli</taxon>
        <taxon>Bacillales</taxon>
        <taxon>Bacillaceae</taxon>
        <taxon>Bacillus</taxon>
    </lineage>
</organism>
<dbReference type="EC" id="3.2.2.23" evidence="2"/>
<dbReference type="EC" id="4.2.99.18" evidence="2"/>
<dbReference type="EMBL" id="AE017333">
    <property type="protein sequence ID" value="AAU41921.1"/>
    <property type="molecule type" value="Genomic_DNA"/>
</dbReference>
<dbReference type="EMBL" id="CP000002">
    <property type="protein sequence ID" value="AAU24562.1"/>
    <property type="molecule type" value="Genomic_DNA"/>
</dbReference>
<dbReference type="RefSeq" id="WP_009329360.1">
    <property type="nucleotide sequence ID" value="NC_006322.1"/>
</dbReference>
<dbReference type="SMR" id="Q65G93"/>
<dbReference type="STRING" id="279010.BL00393"/>
<dbReference type="GeneID" id="92860351"/>
<dbReference type="KEGG" id="bld:BLi03056"/>
<dbReference type="KEGG" id="bli:BL00393"/>
<dbReference type="PATRIC" id="fig|279010.13.peg.3119"/>
<dbReference type="eggNOG" id="COG0266">
    <property type="taxonomic scope" value="Bacteria"/>
</dbReference>
<dbReference type="HOGENOM" id="CLU_038423_1_2_9"/>
<dbReference type="Proteomes" id="UP000000606">
    <property type="component" value="Chromosome"/>
</dbReference>
<dbReference type="GO" id="GO:0034039">
    <property type="term" value="F:8-oxo-7,8-dihydroguanine DNA N-glycosylase activity"/>
    <property type="evidence" value="ECO:0007669"/>
    <property type="project" value="TreeGrafter"/>
</dbReference>
<dbReference type="GO" id="GO:0140078">
    <property type="term" value="F:class I DNA-(apurinic or apyrimidinic site) endonuclease activity"/>
    <property type="evidence" value="ECO:0007669"/>
    <property type="project" value="UniProtKB-EC"/>
</dbReference>
<dbReference type="GO" id="GO:0003684">
    <property type="term" value="F:damaged DNA binding"/>
    <property type="evidence" value="ECO:0007669"/>
    <property type="project" value="InterPro"/>
</dbReference>
<dbReference type="GO" id="GO:0008270">
    <property type="term" value="F:zinc ion binding"/>
    <property type="evidence" value="ECO:0007669"/>
    <property type="project" value="UniProtKB-UniRule"/>
</dbReference>
<dbReference type="GO" id="GO:0006284">
    <property type="term" value="P:base-excision repair"/>
    <property type="evidence" value="ECO:0007669"/>
    <property type="project" value="InterPro"/>
</dbReference>
<dbReference type="CDD" id="cd08966">
    <property type="entry name" value="EcFpg-like_N"/>
    <property type="match status" value="1"/>
</dbReference>
<dbReference type="FunFam" id="1.10.8.50:FF:000003">
    <property type="entry name" value="Formamidopyrimidine-DNA glycosylase"/>
    <property type="match status" value="1"/>
</dbReference>
<dbReference type="FunFam" id="3.20.190.10:FF:000001">
    <property type="entry name" value="Formamidopyrimidine-DNA glycosylase"/>
    <property type="match status" value="1"/>
</dbReference>
<dbReference type="Gene3D" id="1.10.8.50">
    <property type="match status" value="1"/>
</dbReference>
<dbReference type="Gene3D" id="3.20.190.10">
    <property type="entry name" value="MutM-like, N-terminal"/>
    <property type="match status" value="1"/>
</dbReference>
<dbReference type="HAMAP" id="MF_00103">
    <property type="entry name" value="Fapy_DNA_glycosyl"/>
    <property type="match status" value="1"/>
</dbReference>
<dbReference type="InterPro" id="IPR015886">
    <property type="entry name" value="DNA_glyclase/AP_lyase_DNA-bd"/>
</dbReference>
<dbReference type="InterPro" id="IPR015887">
    <property type="entry name" value="DNA_glyclase_Znf_dom_DNA_BS"/>
</dbReference>
<dbReference type="InterPro" id="IPR020629">
    <property type="entry name" value="Formamido-pyr_DNA_Glyclase"/>
</dbReference>
<dbReference type="InterPro" id="IPR012319">
    <property type="entry name" value="FPG_cat"/>
</dbReference>
<dbReference type="InterPro" id="IPR035937">
    <property type="entry name" value="MutM-like_N-ter"/>
</dbReference>
<dbReference type="InterPro" id="IPR010979">
    <property type="entry name" value="Ribosomal_uS13-like_H2TH"/>
</dbReference>
<dbReference type="InterPro" id="IPR000214">
    <property type="entry name" value="Znf_DNA_glyclase/AP_lyase"/>
</dbReference>
<dbReference type="InterPro" id="IPR010663">
    <property type="entry name" value="Znf_FPG/IleRS"/>
</dbReference>
<dbReference type="NCBIfam" id="TIGR00577">
    <property type="entry name" value="fpg"/>
    <property type="match status" value="1"/>
</dbReference>
<dbReference type="NCBIfam" id="NF002211">
    <property type="entry name" value="PRK01103.1"/>
    <property type="match status" value="1"/>
</dbReference>
<dbReference type="PANTHER" id="PTHR22993">
    <property type="entry name" value="FORMAMIDOPYRIMIDINE-DNA GLYCOSYLASE"/>
    <property type="match status" value="1"/>
</dbReference>
<dbReference type="PANTHER" id="PTHR22993:SF9">
    <property type="entry name" value="FORMAMIDOPYRIMIDINE-DNA GLYCOSYLASE"/>
    <property type="match status" value="1"/>
</dbReference>
<dbReference type="Pfam" id="PF01149">
    <property type="entry name" value="Fapy_DNA_glyco"/>
    <property type="match status" value="1"/>
</dbReference>
<dbReference type="Pfam" id="PF06831">
    <property type="entry name" value="H2TH"/>
    <property type="match status" value="1"/>
</dbReference>
<dbReference type="Pfam" id="PF06827">
    <property type="entry name" value="zf-FPG_IleRS"/>
    <property type="match status" value="1"/>
</dbReference>
<dbReference type="SMART" id="SM00898">
    <property type="entry name" value="Fapy_DNA_glyco"/>
    <property type="match status" value="1"/>
</dbReference>
<dbReference type="SMART" id="SM01232">
    <property type="entry name" value="H2TH"/>
    <property type="match status" value="1"/>
</dbReference>
<dbReference type="SUPFAM" id="SSF57716">
    <property type="entry name" value="Glucocorticoid receptor-like (DNA-binding domain)"/>
    <property type="match status" value="1"/>
</dbReference>
<dbReference type="SUPFAM" id="SSF81624">
    <property type="entry name" value="N-terminal domain of MutM-like DNA repair proteins"/>
    <property type="match status" value="1"/>
</dbReference>
<dbReference type="SUPFAM" id="SSF46946">
    <property type="entry name" value="S13-like H2TH domain"/>
    <property type="match status" value="1"/>
</dbReference>
<dbReference type="PROSITE" id="PS51068">
    <property type="entry name" value="FPG_CAT"/>
    <property type="match status" value="1"/>
</dbReference>
<dbReference type="PROSITE" id="PS01242">
    <property type="entry name" value="ZF_FPG_1"/>
    <property type="match status" value="1"/>
</dbReference>
<dbReference type="PROSITE" id="PS51066">
    <property type="entry name" value="ZF_FPG_2"/>
    <property type="match status" value="1"/>
</dbReference>
<name>FPG_BACLD</name>
<comment type="function">
    <text evidence="2">Involved in base excision repair of DNA damaged by oxidation or by mutagenic agents. Acts as a DNA glycosylase that recognizes and removes damaged bases. Has a preference for oxidized purines, such as 7,8-dihydro-8-oxoguanine (8-oxoG). Has AP (apurinic/apyrimidinic) lyase activity and introduces nicks in the DNA strand. Cleaves the DNA backbone by beta-delta elimination to generate a single-strand break at the site of the removed base with both 3'- and 5'-phosphates.</text>
</comment>
<comment type="catalytic activity">
    <reaction evidence="2">
        <text>Hydrolysis of DNA containing ring-opened 7-methylguanine residues, releasing 2,6-diamino-4-hydroxy-5-(N-methyl)formamidopyrimidine.</text>
        <dbReference type="EC" id="3.2.2.23"/>
    </reaction>
</comment>
<comment type="catalytic activity">
    <reaction evidence="2">
        <text>2'-deoxyribonucleotide-(2'-deoxyribose 5'-phosphate)-2'-deoxyribonucleotide-DNA = a 3'-end 2'-deoxyribonucleotide-(2,3-dehydro-2,3-deoxyribose 5'-phosphate)-DNA + a 5'-end 5'-phospho-2'-deoxyribonucleoside-DNA + H(+)</text>
        <dbReference type="Rhea" id="RHEA:66592"/>
        <dbReference type="Rhea" id="RHEA-COMP:13180"/>
        <dbReference type="Rhea" id="RHEA-COMP:16897"/>
        <dbReference type="Rhea" id="RHEA-COMP:17067"/>
        <dbReference type="ChEBI" id="CHEBI:15378"/>
        <dbReference type="ChEBI" id="CHEBI:136412"/>
        <dbReference type="ChEBI" id="CHEBI:157695"/>
        <dbReference type="ChEBI" id="CHEBI:167181"/>
        <dbReference type="EC" id="4.2.99.18"/>
    </reaction>
</comment>
<comment type="cofactor">
    <cofactor evidence="2">
        <name>Zn(2+)</name>
        <dbReference type="ChEBI" id="CHEBI:29105"/>
    </cofactor>
    <text evidence="2">Binds 1 zinc ion per subunit.</text>
</comment>
<comment type="subunit">
    <text evidence="2">Monomer.</text>
</comment>
<comment type="similarity">
    <text evidence="2">Belongs to the FPG family.</text>
</comment>